<dbReference type="EC" id="2.9.1.1" evidence="1"/>
<dbReference type="EMBL" id="BX571875">
    <property type="protein sequence ID" value="CAE17269.1"/>
    <property type="molecule type" value="Genomic_DNA"/>
</dbReference>
<dbReference type="RefSeq" id="WP_011148950.1">
    <property type="nucleotide sequence ID" value="NC_005126.1"/>
</dbReference>
<dbReference type="SMR" id="Q7MY02"/>
<dbReference type="STRING" id="243265.plu4897"/>
<dbReference type="GeneID" id="48851124"/>
<dbReference type="KEGG" id="plu:plu4897"/>
<dbReference type="eggNOG" id="COG1921">
    <property type="taxonomic scope" value="Bacteria"/>
</dbReference>
<dbReference type="HOGENOM" id="CLU_038142_1_0_6"/>
<dbReference type="OrthoDB" id="9787096at2"/>
<dbReference type="UniPathway" id="UPA00906">
    <property type="reaction ID" value="UER00896"/>
</dbReference>
<dbReference type="Proteomes" id="UP000002514">
    <property type="component" value="Chromosome"/>
</dbReference>
<dbReference type="GO" id="GO:0005737">
    <property type="term" value="C:cytoplasm"/>
    <property type="evidence" value="ECO:0007669"/>
    <property type="project" value="UniProtKB-SubCell"/>
</dbReference>
<dbReference type="GO" id="GO:0004125">
    <property type="term" value="F:L-seryl-tRNA(Sec) selenium transferase activity"/>
    <property type="evidence" value="ECO:0007669"/>
    <property type="project" value="UniProtKB-UniRule"/>
</dbReference>
<dbReference type="GO" id="GO:0001717">
    <property type="term" value="P:conversion of seryl-tRNAsec to selenocys-tRNAsec"/>
    <property type="evidence" value="ECO:0007669"/>
    <property type="project" value="UniProtKB-UniRule"/>
</dbReference>
<dbReference type="GO" id="GO:0001514">
    <property type="term" value="P:selenocysteine incorporation"/>
    <property type="evidence" value="ECO:0007669"/>
    <property type="project" value="UniProtKB-UniRule"/>
</dbReference>
<dbReference type="FunFam" id="3.40.640.10:FF:000028">
    <property type="entry name" value="L-seryl-tRNA(Sec) selenium transferase"/>
    <property type="match status" value="1"/>
</dbReference>
<dbReference type="Gene3D" id="3.90.1150.180">
    <property type="match status" value="1"/>
</dbReference>
<dbReference type="Gene3D" id="3.40.640.10">
    <property type="entry name" value="Type I PLP-dependent aspartate aminotransferase-like (Major domain)"/>
    <property type="match status" value="1"/>
</dbReference>
<dbReference type="HAMAP" id="MF_00423">
    <property type="entry name" value="SelA"/>
    <property type="match status" value="1"/>
</dbReference>
<dbReference type="InterPro" id="IPR015424">
    <property type="entry name" value="PyrdxlP-dep_Trfase"/>
</dbReference>
<dbReference type="InterPro" id="IPR015421">
    <property type="entry name" value="PyrdxlP-dep_Trfase_major"/>
</dbReference>
<dbReference type="InterPro" id="IPR018319">
    <property type="entry name" value="SelA-like"/>
</dbReference>
<dbReference type="InterPro" id="IPR004534">
    <property type="entry name" value="SelA_trans"/>
</dbReference>
<dbReference type="InterPro" id="IPR025862">
    <property type="entry name" value="SelA_trans_N_dom"/>
</dbReference>
<dbReference type="NCBIfam" id="TIGR00474">
    <property type="entry name" value="selA"/>
    <property type="match status" value="1"/>
</dbReference>
<dbReference type="PANTHER" id="PTHR32328">
    <property type="entry name" value="L-SERYL-TRNA(SEC) SELENIUM TRANSFERASE"/>
    <property type="match status" value="1"/>
</dbReference>
<dbReference type="PANTHER" id="PTHR32328:SF0">
    <property type="entry name" value="L-SERYL-TRNA(SEC) SELENIUM TRANSFERASE"/>
    <property type="match status" value="1"/>
</dbReference>
<dbReference type="Pfam" id="PF12390">
    <property type="entry name" value="Se-cys_synth_N"/>
    <property type="match status" value="1"/>
</dbReference>
<dbReference type="Pfam" id="PF03841">
    <property type="entry name" value="SelA"/>
    <property type="match status" value="1"/>
</dbReference>
<dbReference type="SUPFAM" id="SSF53383">
    <property type="entry name" value="PLP-dependent transferases"/>
    <property type="match status" value="1"/>
</dbReference>
<comment type="function">
    <text evidence="1">Converts seryl-tRNA(Sec) to selenocysteinyl-tRNA(Sec) required for selenoprotein biosynthesis.</text>
</comment>
<comment type="catalytic activity">
    <reaction evidence="1">
        <text>L-seryl-tRNA(Sec) + selenophosphate + H(+) = L-selenocysteinyl-tRNA(Sec) + phosphate</text>
        <dbReference type="Rhea" id="RHEA:22728"/>
        <dbReference type="Rhea" id="RHEA-COMP:9742"/>
        <dbReference type="Rhea" id="RHEA-COMP:9743"/>
        <dbReference type="ChEBI" id="CHEBI:15378"/>
        <dbReference type="ChEBI" id="CHEBI:16144"/>
        <dbReference type="ChEBI" id="CHEBI:43474"/>
        <dbReference type="ChEBI" id="CHEBI:78533"/>
        <dbReference type="ChEBI" id="CHEBI:78573"/>
        <dbReference type="EC" id="2.9.1.1"/>
    </reaction>
</comment>
<comment type="cofactor">
    <cofactor evidence="1">
        <name>pyridoxal 5'-phosphate</name>
        <dbReference type="ChEBI" id="CHEBI:597326"/>
    </cofactor>
</comment>
<comment type="pathway">
    <text evidence="1">Aminoacyl-tRNA biosynthesis; selenocysteinyl-tRNA(Sec) biosynthesis; selenocysteinyl-tRNA(Sec) from L-seryl-tRNA(Sec) (bacterial route): step 1/1.</text>
</comment>
<comment type="subunit">
    <text evidence="1">Homodecamer; pentamer of dimers. Binds only one seryl-tRNA(Sec) per dimer.</text>
</comment>
<comment type="subcellular location">
    <subcellularLocation>
        <location evidence="1">Cytoplasm</location>
    </subcellularLocation>
</comment>
<comment type="similarity">
    <text evidence="1">Belongs to the SelA family.</text>
</comment>
<organism>
    <name type="scientific">Photorhabdus laumondii subsp. laumondii (strain DSM 15139 / CIP 105565 / TT01)</name>
    <name type="common">Photorhabdus luminescens subsp. laumondii</name>
    <dbReference type="NCBI Taxonomy" id="243265"/>
    <lineage>
        <taxon>Bacteria</taxon>
        <taxon>Pseudomonadati</taxon>
        <taxon>Pseudomonadota</taxon>
        <taxon>Gammaproteobacteria</taxon>
        <taxon>Enterobacterales</taxon>
        <taxon>Morganellaceae</taxon>
        <taxon>Photorhabdus</taxon>
    </lineage>
</organism>
<name>SELA_PHOLL</name>
<reference key="1">
    <citation type="journal article" date="2003" name="Nat. Biotechnol.">
        <title>The genome sequence of the entomopathogenic bacterium Photorhabdus luminescens.</title>
        <authorList>
            <person name="Duchaud E."/>
            <person name="Rusniok C."/>
            <person name="Frangeul L."/>
            <person name="Buchrieser C."/>
            <person name="Givaudan A."/>
            <person name="Taourit S."/>
            <person name="Bocs S."/>
            <person name="Boursaux-Eude C."/>
            <person name="Chandler M."/>
            <person name="Charles J.-F."/>
            <person name="Dassa E."/>
            <person name="Derose R."/>
            <person name="Derzelle S."/>
            <person name="Freyssinet G."/>
            <person name="Gaudriault S."/>
            <person name="Medigue C."/>
            <person name="Lanois A."/>
            <person name="Powell K."/>
            <person name="Siguier P."/>
            <person name="Vincent R."/>
            <person name="Wingate V."/>
            <person name="Zouine M."/>
            <person name="Glaser P."/>
            <person name="Boemare N."/>
            <person name="Danchin A."/>
            <person name="Kunst F."/>
        </authorList>
    </citation>
    <scope>NUCLEOTIDE SEQUENCE [LARGE SCALE GENOMIC DNA]</scope>
    <source>
        <strain>DSM 15139 / CIP 105565 / TT01</strain>
    </source>
</reference>
<proteinExistence type="inferred from homology"/>
<accession>Q7MY02</accession>
<protein>
    <recommendedName>
        <fullName evidence="1">L-seryl-tRNA(Sec) selenium transferase</fullName>
        <ecNumber evidence="1">2.9.1.1</ecNumber>
    </recommendedName>
    <alternativeName>
        <fullName evidence="1">Selenocysteine synthase</fullName>
        <shortName evidence="1">Sec synthase</shortName>
    </alternativeName>
    <alternativeName>
        <fullName evidence="1">Selenocysteinyl-tRNA(Sec) synthase</fullName>
    </alternativeName>
</protein>
<keyword id="KW-0963">Cytoplasm</keyword>
<keyword id="KW-0648">Protein biosynthesis</keyword>
<keyword id="KW-0663">Pyridoxal phosphate</keyword>
<keyword id="KW-1185">Reference proteome</keyword>
<keyword id="KW-0711">Selenium</keyword>
<keyword id="KW-0808">Transferase</keyword>
<feature type="chain" id="PRO_0000189611" description="L-seryl-tRNA(Sec) selenium transferase">
    <location>
        <begin position="1"/>
        <end position="463"/>
    </location>
</feature>
<feature type="modified residue" description="N6-(pyridoxal phosphate)lysine" evidence="1">
    <location>
        <position position="295"/>
    </location>
</feature>
<evidence type="ECO:0000255" key="1">
    <source>
        <dbReference type="HAMAP-Rule" id="MF_00423"/>
    </source>
</evidence>
<sequence>MTHKPCLLYSQLPAIDRLLREPQITPLVEQYGQTLVTATLRRMQEQARINIKQYQALPDWCDNWASALGQQLEQKQALALKPVFNLSGTVIHTNLGRALMAESAIEAVTQVMRSPVTLEYSLNNAERGHRDHALADLLCELTGAEDACIVNNNAAAVLLLLATVASGKQVVVSRGELVEIGGAFRIPDVMVQAGCRLVEVGTTNRTHLKDYRQAINEETALLMKVHTSNYNIDGFTAEVSGRELATLGIASQIPTAIDLGSGSMINMVQYGLPAEPMPQDYLNQGIDLVTFSGDKLLGGPQAGIILGKKHWIEAIQRHPLKRALRADKMTLAALEATLRLYQRPEQLCQQLPTLRLLTRSQQQMHDMAQRLLPQLQAHYGDQFIVRDEPCYSQIGSGSLPVDRLPSWALTFAAVEGQGSSLERLARCWRGLAKPVLGRISGGRLWLDLRCLEDEKALLQALLL</sequence>
<gene>
    <name evidence="1" type="primary">selA</name>
    <name type="ordered locus">plu4897</name>
</gene>